<keyword id="KW-0963">Cytoplasm</keyword>
<keyword id="KW-0251">Elongation factor</keyword>
<keyword id="KW-0648">Protein biosynthesis</keyword>
<keyword id="KW-1185">Reference proteome</keyword>
<sequence>MAITAAQVKELRERTGAGMMDCKKALTETNGDIELAIENMRKSGAAKAAKKAGNIAAEGTILIKQGEGFSVLLEVNCQTDFVAKDSNFLAFANEVLDVAAAGKVSIADLQAQFEETRVALVAKIGENINVRRVEYIDGASQASYRHGDRIGVVVTGEADEETLKHVAMHVAASKPEYVNPSDVPAEVVEKEKAVQIEIAMNEGKPQEIAEKMVAGRMKKFTGEVSLTGQAFIMEPKKTVGEILKEKGATVTNFIRLEVGEGIEKKEEDFAAEVAAQIAASKA</sequence>
<protein>
    <recommendedName>
        <fullName evidence="1">Elongation factor Ts</fullName>
        <shortName evidence="1">EF-Ts</shortName>
    </recommendedName>
</protein>
<accession>A3QGA2</accession>
<comment type="function">
    <text evidence="1">Associates with the EF-Tu.GDP complex and induces the exchange of GDP to GTP. It remains bound to the aminoacyl-tRNA.EF-Tu.GTP complex up to the GTP hydrolysis stage on the ribosome.</text>
</comment>
<comment type="subcellular location">
    <subcellularLocation>
        <location evidence="1">Cytoplasm</location>
    </subcellularLocation>
</comment>
<comment type="similarity">
    <text evidence="1">Belongs to the EF-Ts family.</text>
</comment>
<gene>
    <name evidence="1" type="primary">tsf</name>
    <name type="ordered locus">Shew_2634</name>
</gene>
<organism>
    <name type="scientific">Shewanella loihica (strain ATCC BAA-1088 / PV-4)</name>
    <dbReference type="NCBI Taxonomy" id="323850"/>
    <lineage>
        <taxon>Bacteria</taxon>
        <taxon>Pseudomonadati</taxon>
        <taxon>Pseudomonadota</taxon>
        <taxon>Gammaproteobacteria</taxon>
        <taxon>Alteromonadales</taxon>
        <taxon>Shewanellaceae</taxon>
        <taxon>Shewanella</taxon>
    </lineage>
</organism>
<name>EFTS_SHELP</name>
<feature type="chain" id="PRO_1000006177" description="Elongation factor Ts">
    <location>
        <begin position="1"/>
        <end position="282"/>
    </location>
</feature>
<feature type="region of interest" description="Involved in Mg(2+) ion dislocation from EF-Tu" evidence="1">
    <location>
        <begin position="79"/>
        <end position="82"/>
    </location>
</feature>
<evidence type="ECO:0000255" key="1">
    <source>
        <dbReference type="HAMAP-Rule" id="MF_00050"/>
    </source>
</evidence>
<proteinExistence type="inferred from homology"/>
<dbReference type="EMBL" id="CP000606">
    <property type="protein sequence ID" value="ABO24500.1"/>
    <property type="molecule type" value="Genomic_DNA"/>
</dbReference>
<dbReference type="RefSeq" id="WP_011866431.1">
    <property type="nucleotide sequence ID" value="NC_009092.1"/>
</dbReference>
<dbReference type="SMR" id="A3QGA2"/>
<dbReference type="STRING" id="323850.Shew_2634"/>
<dbReference type="KEGG" id="slo:Shew_2634"/>
<dbReference type="eggNOG" id="COG0264">
    <property type="taxonomic scope" value="Bacteria"/>
</dbReference>
<dbReference type="HOGENOM" id="CLU_047155_0_2_6"/>
<dbReference type="OrthoDB" id="9808348at2"/>
<dbReference type="Proteomes" id="UP000001558">
    <property type="component" value="Chromosome"/>
</dbReference>
<dbReference type="GO" id="GO:0005737">
    <property type="term" value="C:cytoplasm"/>
    <property type="evidence" value="ECO:0007669"/>
    <property type="project" value="UniProtKB-SubCell"/>
</dbReference>
<dbReference type="GO" id="GO:0003746">
    <property type="term" value="F:translation elongation factor activity"/>
    <property type="evidence" value="ECO:0007669"/>
    <property type="project" value="UniProtKB-UniRule"/>
</dbReference>
<dbReference type="CDD" id="cd14275">
    <property type="entry name" value="UBA_EF-Ts"/>
    <property type="match status" value="1"/>
</dbReference>
<dbReference type="FunFam" id="1.10.286.20:FF:000001">
    <property type="entry name" value="Elongation factor Ts"/>
    <property type="match status" value="1"/>
</dbReference>
<dbReference type="FunFam" id="1.10.8.10:FF:000001">
    <property type="entry name" value="Elongation factor Ts"/>
    <property type="match status" value="1"/>
</dbReference>
<dbReference type="FunFam" id="3.30.479.20:FF:000001">
    <property type="entry name" value="Elongation factor Ts"/>
    <property type="match status" value="1"/>
</dbReference>
<dbReference type="Gene3D" id="1.10.286.20">
    <property type="match status" value="1"/>
</dbReference>
<dbReference type="Gene3D" id="1.10.8.10">
    <property type="entry name" value="DNA helicase RuvA subunit, C-terminal domain"/>
    <property type="match status" value="1"/>
</dbReference>
<dbReference type="Gene3D" id="3.30.479.20">
    <property type="entry name" value="Elongation factor Ts, dimerisation domain"/>
    <property type="match status" value="2"/>
</dbReference>
<dbReference type="HAMAP" id="MF_00050">
    <property type="entry name" value="EF_Ts"/>
    <property type="match status" value="1"/>
</dbReference>
<dbReference type="InterPro" id="IPR036402">
    <property type="entry name" value="EF-Ts_dimer_sf"/>
</dbReference>
<dbReference type="InterPro" id="IPR001816">
    <property type="entry name" value="Transl_elong_EFTs/EF1B"/>
</dbReference>
<dbReference type="InterPro" id="IPR014039">
    <property type="entry name" value="Transl_elong_EFTs/EF1B_dimer"/>
</dbReference>
<dbReference type="InterPro" id="IPR018101">
    <property type="entry name" value="Transl_elong_Ts_CS"/>
</dbReference>
<dbReference type="InterPro" id="IPR009060">
    <property type="entry name" value="UBA-like_sf"/>
</dbReference>
<dbReference type="NCBIfam" id="TIGR00116">
    <property type="entry name" value="tsf"/>
    <property type="match status" value="1"/>
</dbReference>
<dbReference type="PANTHER" id="PTHR11741">
    <property type="entry name" value="ELONGATION FACTOR TS"/>
    <property type="match status" value="1"/>
</dbReference>
<dbReference type="PANTHER" id="PTHR11741:SF0">
    <property type="entry name" value="ELONGATION FACTOR TS, MITOCHONDRIAL"/>
    <property type="match status" value="1"/>
</dbReference>
<dbReference type="Pfam" id="PF00889">
    <property type="entry name" value="EF_TS"/>
    <property type="match status" value="1"/>
</dbReference>
<dbReference type="SUPFAM" id="SSF54713">
    <property type="entry name" value="Elongation factor Ts (EF-Ts), dimerisation domain"/>
    <property type="match status" value="2"/>
</dbReference>
<dbReference type="SUPFAM" id="SSF46934">
    <property type="entry name" value="UBA-like"/>
    <property type="match status" value="1"/>
</dbReference>
<dbReference type="PROSITE" id="PS01126">
    <property type="entry name" value="EF_TS_1"/>
    <property type="match status" value="1"/>
</dbReference>
<dbReference type="PROSITE" id="PS01127">
    <property type="entry name" value="EF_TS_2"/>
    <property type="match status" value="1"/>
</dbReference>
<reference key="1">
    <citation type="submission" date="2007-03" db="EMBL/GenBank/DDBJ databases">
        <title>Complete sequence of Shewanella loihica PV-4.</title>
        <authorList>
            <consortium name="US DOE Joint Genome Institute"/>
            <person name="Copeland A."/>
            <person name="Lucas S."/>
            <person name="Lapidus A."/>
            <person name="Barry K."/>
            <person name="Detter J.C."/>
            <person name="Glavina del Rio T."/>
            <person name="Hammon N."/>
            <person name="Israni S."/>
            <person name="Dalin E."/>
            <person name="Tice H."/>
            <person name="Pitluck S."/>
            <person name="Chain P."/>
            <person name="Malfatti S."/>
            <person name="Shin M."/>
            <person name="Vergez L."/>
            <person name="Schmutz J."/>
            <person name="Larimer F."/>
            <person name="Land M."/>
            <person name="Hauser L."/>
            <person name="Kyrpides N."/>
            <person name="Mikhailova N."/>
            <person name="Romine M.F."/>
            <person name="Serres G."/>
            <person name="Fredrickson J."/>
            <person name="Tiedje J."/>
            <person name="Richardson P."/>
        </authorList>
    </citation>
    <scope>NUCLEOTIDE SEQUENCE [LARGE SCALE GENOMIC DNA]</scope>
    <source>
        <strain>ATCC BAA-1088 / PV-4</strain>
    </source>
</reference>